<organism>
    <name type="scientific">Pelotomaculum thermopropionicum (strain DSM 13744 / JCM 10971 / SI)</name>
    <dbReference type="NCBI Taxonomy" id="370438"/>
    <lineage>
        <taxon>Bacteria</taxon>
        <taxon>Bacillati</taxon>
        <taxon>Bacillota</taxon>
        <taxon>Clostridia</taxon>
        <taxon>Eubacteriales</taxon>
        <taxon>Desulfotomaculaceae</taxon>
        <taxon>Pelotomaculum</taxon>
    </lineage>
</organism>
<accession>A5D3W2</accession>
<keyword id="KW-0963">Cytoplasm</keyword>
<keyword id="KW-0255">Endonuclease</keyword>
<keyword id="KW-0378">Hydrolase</keyword>
<keyword id="KW-0479">Metal-binding</keyword>
<keyword id="KW-0540">Nuclease</keyword>
<keyword id="KW-1185">Reference proteome</keyword>
<keyword id="KW-0690">Ribosome biogenesis</keyword>
<keyword id="KW-0698">rRNA processing</keyword>
<keyword id="KW-0862">Zinc</keyword>
<evidence type="ECO:0000255" key="1">
    <source>
        <dbReference type="HAMAP-Rule" id="MF_00009"/>
    </source>
</evidence>
<protein>
    <recommendedName>
        <fullName evidence="1">Endoribonuclease YbeY</fullName>
        <ecNumber evidence="1">3.1.-.-</ecNumber>
    </recommendedName>
</protein>
<comment type="function">
    <text evidence="1">Single strand-specific metallo-endoribonuclease involved in late-stage 70S ribosome quality control and in maturation of the 3' terminus of the 16S rRNA.</text>
</comment>
<comment type="cofactor">
    <cofactor evidence="1">
        <name>Zn(2+)</name>
        <dbReference type="ChEBI" id="CHEBI:29105"/>
    </cofactor>
    <text evidence="1">Binds 1 zinc ion.</text>
</comment>
<comment type="subcellular location">
    <subcellularLocation>
        <location evidence="1">Cytoplasm</location>
    </subcellularLocation>
</comment>
<comment type="similarity">
    <text evidence="1">Belongs to the endoribonuclease YbeY family.</text>
</comment>
<sequence length="152" mass="16698">MPVLVSNLQGKVAVDEALTGLLTRAAQEVLKAEGYGEEAEVSLVFVDDAYIHGLNRQYRGVDAPTDVLSFAMQEGEPLAGGEEELILGDVVISLQAAERQAGEYGHSLQREAAYLAVHGVLHLLGYDHQGEEERKIMRRKEEEVLGRLNLTR</sequence>
<proteinExistence type="inferred from homology"/>
<name>YBEY_PELTS</name>
<gene>
    <name evidence="1" type="primary">ybeY</name>
    <name type="ordered locus">PTH_0892</name>
</gene>
<feature type="chain" id="PRO_1000073910" description="Endoribonuclease YbeY">
    <location>
        <begin position="1"/>
        <end position="152"/>
    </location>
</feature>
<feature type="binding site" evidence="1">
    <location>
        <position position="118"/>
    </location>
    <ligand>
        <name>Zn(2+)</name>
        <dbReference type="ChEBI" id="CHEBI:29105"/>
        <note>catalytic</note>
    </ligand>
</feature>
<feature type="binding site" evidence="1">
    <location>
        <position position="122"/>
    </location>
    <ligand>
        <name>Zn(2+)</name>
        <dbReference type="ChEBI" id="CHEBI:29105"/>
        <note>catalytic</note>
    </ligand>
</feature>
<feature type="binding site" evidence="1">
    <location>
        <position position="128"/>
    </location>
    <ligand>
        <name>Zn(2+)</name>
        <dbReference type="ChEBI" id="CHEBI:29105"/>
        <note>catalytic</note>
    </ligand>
</feature>
<reference key="1">
    <citation type="journal article" date="2008" name="Genome Res.">
        <title>The genome of Pelotomaculum thermopropionicum reveals niche-associated evolution in anaerobic microbiota.</title>
        <authorList>
            <person name="Kosaka T."/>
            <person name="Kato S."/>
            <person name="Shimoyama T."/>
            <person name="Ishii S."/>
            <person name="Abe T."/>
            <person name="Watanabe K."/>
        </authorList>
    </citation>
    <scope>NUCLEOTIDE SEQUENCE [LARGE SCALE GENOMIC DNA]</scope>
    <source>
        <strain>DSM 13744 / JCM 10971 / SI</strain>
    </source>
</reference>
<dbReference type="EC" id="3.1.-.-" evidence="1"/>
<dbReference type="EMBL" id="AP009389">
    <property type="protein sequence ID" value="BAF59073.1"/>
    <property type="molecule type" value="Genomic_DNA"/>
</dbReference>
<dbReference type="SMR" id="A5D3W2"/>
<dbReference type="STRING" id="370438.PTH_0892"/>
<dbReference type="KEGG" id="pth:PTH_0892"/>
<dbReference type="eggNOG" id="COG0319">
    <property type="taxonomic scope" value="Bacteria"/>
</dbReference>
<dbReference type="HOGENOM" id="CLU_106710_3_0_9"/>
<dbReference type="Proteomes" id="UP000006556">
    <property type="component" value="Chromosome"/>
</dbReference>
<dbReference type="GO" id="GO:0005737">
    <property type="term" value="C:cytoplasm"/>
    <property type="evidence" value="ECO:0007669"/>
    <property type="project" value="UniProtKB-SubCell"/>
</dbReference>
<dbReference type="GO" id="GO:0004222">
    <property type="term" value="F:metalloendopeptidase activity"/>
    <property type="evidence" value="ECO:0007669"/>
    <property type="project" value="InterPro"/>
</dbReference>
<dbReference type="GO" id="GO:0004521">
    <property type="term" value="F:RNA endonuclease activity"/>
    <property type="evidence" value="ECO:0007669"/>
    <property type="project" value="UniProtKB-UniRule"/>
</dbReference>
<dbReference type="GO" id="GO:0008270">
    <property type="term" value="F:zinc ion binding"/>
    <property type="evidence" value="ECO:0007669"/>
    <property type="project" value="UniProtKB-UniRule"/>
</dbReference>
<dbReference type="GO" id="GO:0006364">
    <property type="term" value="P:rRNA processing"/>
    <property type="evidence" value="ECO:0007669"/>
    <property type="project" value="UniProtKB-UniRule"/>
</dbReference>
<dbReference type="Gene3D" id="3.40.390.30">
    <property type="entry name" value="Metalloproteases ('zincins'), catalytic domain"/>
    <property type="match status" value="1"/>
</dbReference>
<dbReference type="HAMAP" id="MF_00009">
    <property type="entry name" value="Endoribonucl_YbeY"/>
    <property type="match status" value="1"/>
</dbReference>
<dbReference type="InterPro" id="IPR023091">
    <property type="entry name" value="MetalPrtase_cat_dom_sf_prd"/>
</dbReference>
<dbReference type="InterPro" id="IPR002036">
    <property type="entry name" value="YbeY"/>
</dbReference>
<dbReference type="InterPro" id="IPR020549">
    <property type="entry name" value="YbeY_CS"/>
</dbReference>
<dbReference type="NCBIfam" id="TIGR00043">
    <property type="entry name" value="rRNA maturation RNase YbeY"/>
    <property type="match status" value="1"/>
</dbReference>
<dbReference type="PANTHER" id="PTHR46986">
    <property type="entry name" value="ENDORIBONUCLEASE YBEY, CHLOROPLASTIC"/>
    <property type="match status" value="1"/>
</dbReference>
<dbReference type="PANTHER" id="PTHR46986:SF1">
    <property type="entry name" value="ENDORIBONUCLEASE YBEY, CHLOROPLASTIC"/>
    <property type="match status" value="1"/>
</dbReference>
<dbReference type="Pfam" id="PF02130">
    <property type="entry name" value="YbeY"/>
    <property type="match status" value="1"/>
</dbReference>
<dbReference type="SUPFAM" id="SSF55486">
    <property type="entry name" value="Metalloproteases ('zincins'), catalytic domain"/>
    <property type="match status" value="1"/>
</dbReference>
<dbReference type="PROSITE" id="PS01306">
    <property type="entry name" value="UPF0054"/>
    <property type="match status" value="1"/>
</dbReference>